<name>GAR2_HUMAN</name>
<sequence length="422" mass="47076">MKKNTSKTTMRINKQDALCTPHSHDPRDLQNMLDGGEYAPFVSPPMLESNFIQVNRRGESIYLHNRANWVTVGICFSSSTHKIPNVMLLAHLTPGAQKDTETLFKSLLTSPPAEKLVLTRFLPLQFVTLSVHDAENMSLKVKLVSGRAYYLQLCTSAYKQDTLFSQWVALISLLNQEKAKVSKVSEVSSLSGITNSTDITGSMDVTDVTTFTAILTPYMYAGTGPEHVRDSIDFPEFTDITDITDVTDLPENEVPEVPDVRIVTEVIEVREATEVTDSSDITNCSGVTVVFENNDLIRAKQEEKEKLKNILKPGCLQDTKSKSELKESSKHVTISNITLTFEGKRYFQTTLTPVESEANTSKEMKDKTSEEKMPDFQSTALKAEESRSLRTESNTSVLSPHIKSPSNFLKLVPHLSAPFSRE</sequence>
<organism>
    <name type="scientific">Homo sapiens</name>
    <name type="common">Human</name>
    <dbReference type="NCBI Taxonomy" id="9606"/>
    <lineage>
        <taxon>Eukaryota</taxon>
        <taxon>Metazoa</taxon>
        <taxon>Chordata</taxon>
        <taxon>Craniata</taxon>
        <taxon>Vertebrata</taxon>
        <taxon>Euteleostomi</taxon>
        <taxon>Mammalia</taxon>
        <taxon>Eutheria</taxon>
        <taxon>Euarchontoglires</taxon>
        <taxon>Primates</taxon>
        <taxon>Haplorrhini</taxon>
        <taxon>Catarrhini</taxon>
        <taxon>Hominidae</taxon>
        <taxon>Homo</taxon>
    </lineage>
</organism>
<evidence type="ECO:0000250" key="1">
    <source>
        <dbReference type="UniProtKB" id="D3YV92"/>
    </source>
</evidence>
<evidence type="ECO:0000256" key="2">
    <source>
        <dbReference type="SAM" id="MobiDB-lite"/>
    </source>
</evidence>
<evidence type="ECO:0000269" key="3">
    <source>
    </source>
</evidence>
<evidence type="ECO:0000303" key="4">
    <source>
    </source>
</evidence>
<evidence type="ECO:0000305" key="5"/>
<evidence type="ECO:0000305" key="6">
    <source>
    </source>
</evidence>
<evidence type="ECO:0000312" key="7">
    <source>
        <dbReference type="HGNC" id="HGNC:20101"/>
    </source>
</evidence>
<keyword id="KW-0025">Alternative splicing</keyword>
<keyword id="KW-0966">Cell projection</keyword>
<keyword id="KW-0969">Cilium</keyword>
<keyword id="KW-0282">Flagellum</keyword>
<keyword id="KW-1267">Proteomics identification</keyword>
<keyword id="KW-1185">Reference proteome</keyword>
<protein>
    <recommendedName>
        <fullName evidence="5">Golgi-associated RAB2 interactor protein 2</fullName>
    </recommendedName>
</protein>
<reference key="1">
    <citation type="journal article" date="2004" name="Nat. Genet.">
        <title>Complete sequencing and characterization of 21,243 full-length human cDNAs.</title>
        <authorList>
            <person name="Ota T."/>
            <person name="Suzuki Y."/>
            <person name="Nishikawa T."/>
            <person name="Otsuki T."/>
            <person name="Sugiyama T."/>
            <person name="Irie R."/>
            <person name="Wakamatsu A."/>
            <person name="Hayashi K."/>
            <person name="Sato H."/>
            <person name="Nagai K."/>
            <person name="Kimura K."/>
            <person name="Makita H."/>
            <person name="Sekine M."/>
            <person name="Obayashi M."/>
            <person name="Nishi T."/>
            <person name="Shibahara T."/>
            <person name="Tanaka T."/>
            <person name="Ishii S."/>
            <person name="Yamamoto J."/>
            <person name="Saito K."/>
            <person name="Kawai Y."/>
            <person name="Isono Y."/>
            <person name="Nakamura Y."/>
            <person name="Nagahari K."/>
            <person name="Murakami K."/>
            <person name="Yasuda T."/>
            <person name="Iwayanagi T."/>
            <person name="Wagatsuma M."/>
            <person name="Shiratori A."/>
            <person name="Sudo H."/>
            <person name="Hosoiri T."/>
            <person name="Kaku Y."/>
            <person name="Kodaira H."/>
            <person name="Kondo H."/>
            <person name="Sugawara M."/>
            <person name="Takahashi M."/>
            <person name="Kanda K."/>
            <person name="Yokoi T."/>
            <person name="Furuya T."/>
            <person name="Kikkawa E."/>
            <person name="Omura Y."/>
            <person name="Abe K."/>
            <person name="Kamihara K."/>
            <person name="Katsuta N."/>
            <person name="Sato K."/>
            <person name="Tanikawa M."/>
            <person name="Yamazaki M."/>
            <person name="Ninomiya K."/>
            <person name="Ishibashi T."/>
            <person name="Yamashita H."/>
            <person name="Murakawa K."/>
            <person name="Fujimori K."/>
            <person name="Tanai H."/>
            <person name="Kimata M."/>
            <person name="Watanabe M."/>
            <person name="Hiraoka S."/>
            <person name="Chiba Y."/>
            <person name="Ishida S."/>
            <person name="Ono Y."/>
            <person name="Takiguchi S."/>
            <person name="Watanabe S."/>
            <person name="Yosida M."/>
            <person name="Hotuta T."/>
            <person name="Kusano J."/>
            <person name="Kanehori K."/>
            <person name="Takahashi-Fujii A."/>
            <person name="Hara H."/>
            <person name="Tanase T.-O."/>
            <person name="Nomura Y."/>
            <person name="Togiya S."/>
            <person name="Komai F."/>
            <person name="Hara R."/>
            <person name="Takeuchi K."/>
            <person name="Arita M."/>
            <person name="Imose N."/>
            <person name="Musashino K."/>
            <person name="Yuuki H."/>
            <person name="Oshima A."/>
            <person name="Sasaki N."/>
            <person name="Aotsuka S."/>
            <person name="Yoshikawa Y."/>
            <person name="Matsunawa H."/>
            <person name="Ichihara T."/>
            <person name="Shiohata N."/>
            <person name="Sano S."/>
            <person name="Moriya S."/>
            <person name="Momiyama H."/>
            <person name="Satoh N."/>
            <person name="Takami S."/>
            <person name="Terashima Y."/>
            <person name="Suzuki O."/>
            <person name="Nakagawa S."/>
            <person name="Senoh A."/>
            <person name="Mizoguchi H."/>
            <person name="Goto Y."/>
            <person name="Shimizu F."/>
            <person name="Wakebe H."/>
            <person name="Hishigaki H."/>
            <person name="Watanabe T."/>
            <person name="Sugiyama A."/>
            <person name="Takemoto M."/>
            <person name="Kawakami B."/>
            <person name="Yamazaki M."/>
            <person name="Watanabe K."/>
            <person name="Kumagai A."/>
            <person name="Itakura S."/>
            <person name="Fukuzumi Y."/>
            <person name="Fujimori Y."/>
            <person name="Komiyama M."/>
            <person name="Tashiro H."/>
            <person name="Tanigami A."/>
            <person name="Fujiwara T."/>
            <person name="Ono T."/>
            <person name="Yamada K."/>
            <person name="Fujii Y."/>
            <person name="Ozaki K."/>
            <person name="Hirao M."/>
            <person name="Ohmori Y."/>
            <person name="Kawabata A."/>
            <person name="Hikiji T."/>
            <person name="Kobatake N."/>
            <person name="Inagaki H."/>
            <person name="Ikema Y."/>
            <person name="Okamoto S."/>
            <person name="Okitani R."/>
            <person name="Kawakami T."/>
            <person name="Noguchi S."/>
            <person name="Itoh T."/>
            <person name="Shigeta K."/>
            <person name="Senba T."/>
            <person name="Matsumura K."/>
            <person name="Nakajima Y."/>
            <person name="Mizuno T."/>
            <person name="Morinaga M."/>
            <person name="Sasaki M."/>
            <person name="Togashi T."/>
            <person name="Oyama M."/>
            <person name="Hata H."/>
            <person name="Watanabe M."/>
            <person name="Komatsu T."/>
            <person name="Mizushima-Sugano J."/>
            <person name="Satoh T."/>
            <person name="Shirai Y."/>
            <person name="Takahashi Y."/>
            <person name="Nakagawa K."/>
            <person name="Okumura K."/>
            <person name="Nagase T."/>
            <person name="Nomura N."/>
            <person name="Kikuchi H."/>
            <person name="Masuho Y."/>
            <person name="Yamashita R."/>
            <person name="Nakai K."/>
            <person name="Yada T."/>
            <person name="Nakamura Y."/>
            <person name="Ohara O."/>
            <person name="Isogai T."/>
            <person name="Sugano S."/>
        </authorList>
    </citation>
    <scope>NUCLEOTIDE SEQUENCE [LARGE SCALE MRNA] (ISOFORM 1)</scope>
    <source>
        <tissue>Testis</tissue>
    </source>
</reference>
<reference key="2">
    <citation type="journal article" date="2004" name="Genome Res.">
        <title>The status, quality, and expansion of the NIH full-length cDNA project: the Mammalian Gene Collection (MGC).</title>
        <authorList>
            <consortium name="The MGC Project Team"/>
        </authorList>
    </citation>
    <scope>NUCLEOTIDE SEQUENCE [LARGE SCALE MRNA] (ISOFORM 2)</scope>
    <source>
        <tissue>Brain</tissue>
    </source>
</reference>
<reference key="3">
    <citation type="journal article" date="2017" name="Hum. Reprod.">
        <title>The expression characteristics of FAM71D and its association with sperm motility.</title>
        <authorList>
            <person name="Ma Q."/>
            <person name="Li Y."/>
            <person name="Luo M."/>
            <person name="Guo H."/>
            <person name="Lin S."/>
            <person name="Chen J."/>
            <person name="Du Y."/>
            <person name="Jiang Z."/>
            <person name="Gui Y."/>
        </authorList>
    </citation>
    <scope>FUNCTION</scope>
    <scope>TISSUE SPECIFICITY</scope>
</reference>
<comment type="function">
    <text evidence="6">Seems to play a role in sperm motility.</text>
</comment>
<comment type="subunit">
    <text evidence="1">Interacts with CALM1.</text>
</comment>
<comment type="subcellular location">
    <subcellularLocation>
        <location evidence="1">Cell projection</location>
        <location evidence="1">Cilium</location>
        <location evidence="1">Flagellum</location>
    </subcellularLocation>
    <text evidence="1">In mature sperm, localizes in the midpiece of flagella.</text>
</comment>
<comment type="alternative products">
    <event type="alternative splicing"/>
    <isoform>
        <id>Q8N9W8-1</id>
        <name>1</name>
        <sequence type="displayed"/>
    </isoform>
    <isoform>
        <id>Q8N9W8-2</id>
        <name>2</name>
        <sequence type="described" ref="VSP_009298"/>
    </isoform>
</comment>
<comment type="tissue specificity">
    <text evidence="3">Expressed in spermatozoa (at protein level).</text>
</comment>
<comment type="similarity">
    <text evidence="5">Belongs to the GARIN family.</text>
</comment>
<feature type="chain" id="PRO_0000089895" description="Golgi-associated RAB2 interactor protein 2">
    <location>
        <begin position="1"/>
        <end position="422"/>
    </location>
</feature>
<feature type="region of interest" description="Disordered" evidence="2">
    <location>
        <begin position="353"/>
        <end position="404"/>
    </location>
</feature>
<feature type="compositionally biased region" description="Basic and acidic residues" evidence="2">
    <location>
        <begin position="360"/>
        <end position="374"/>
    </location>
</feature>
<feature type="splice variant" id="VSP_009298" description="In isoform 2." evidence="4">
    <location>
        <begin position="322"/>
        <end position="343"/>
    </location>
</feature>
<feature type="sequence conflict" description="In Ref. 1; BAC04169." evidence="5" ref="1">
    <original>L</original>
    <variation>P</variation>
    <location>
        <position position="92"/>
    </location>
</feature>
<gene>
    <name evidence="7" type="primary">GARIN2</name>
    <name type="synonym">C14orf54</name>
    <name type="synonym">FAM71D</name>
</gene>
<dbReference type="EMBL" id="AK093449">
    <property type="protein sequence ID" value="BAC04169.1"/>
    <property type="molecule type" value="mRNA"/>
</dbReference>
<dbReference type="EMBL" id="BC050401">
    <property type="protein sequence ID" value="AAH50401.1"/>
    <property type="molecule type" value="mRNA"/>
</dbReference>
<dbReference type="CCDS" id="CCDS9778.1">
    <molecule id="Q8N9W8-1"/>
</dbReference>
<dbReference type="RefSeq" id="NP_775797.2">
    <molecule id="Q8N9W8-1"/>
    <property type="nucleotide sequence ID" value="NM_173526.4"/>
</dbReference>
<dbReference type="RefSeq" id="XP_011534802.1">
    <molecule id="Q8N9W8-1"/>
    <property type="nucleotide sequence ID" value="XM_011536500.2"/>
</dbReference>
<dbReference type="RefSeq" id="XP_011534804.1">
    <property type="nucleotide sequence ID" value="XM_011536502.1"/>
</dbReference>
<dbReference type="RefSeq" id="XP_011534805.1">
    <molecule id="Q8N9W8-1"/>
    <property type="nucleotide sequence ID" value="XM_011536503.3"/>
</dbReference>
<dbReference type="RefSeq" id="XP_047286987.1">
    <molecule id="Q8N9W8-1"/>
    <property type="nucleotide sequence ID" value="XM_047431031.1"/>
</dbReference>
<dbReference type="RefSeq" id="XP_054231464.1">
    <molecule id="Q8N9W8-1"/>
    <property type="nucleotide sequence ID" value="XM_054375489.1"/>
</dbReference>
<dbReference type="RefSeq" id="XP_054231465.1">
    <molecule id="Q8N9W8-1"/>
    <property type="nucleotide sequence ID" value="XM_054375490.1"/>
</dbReference>
<dbReference type="RefSeq" id="XP_054231466.1">
    <molecule id="Q8N9W8-1"/>
    <property type="nucleotide sequence ID" value="XM_054375491.1"/>
</dbReference>
<dbReference type="BioGRID" id="127772">
    <property type="interactions" value="11"/>
</dbReference>
<dbReference type="FunCoup" id="Q8N9W8">
    <property type="interactions" value="8"/>
</dbReference>
<dbReference type="IntAct" id="Q8N9W8">
    <property type="interactions" value="3"/>
</dbReference>
<dbReference type="STRING" id="9606.ENSP00000483154"/>
<dbReference type="GlyGen" id="Q8N9W8">
    <property type="glycosylation" value="2 sites, 1 O-linked glycan (1 site)"/>
</dbReference>
<dbReference type="iPTMnet" id="Q8N9W8"/>
<dbReference type="PhosphoSitePlus" id="Q8N9W8"/>
<dbReference type="BioMuta" id="FAM71D"/>
<dbReference type="DMDM" id="116241304"/>
<dbReference type="jPOST" id="Q8N9W8"/>
<dbReference type="MassIVE" id="Q8N9W8"/>
<dbReference type="PaxDb" id="9606-ENSP00000483154"/>
<dbReference type="PeptideAtlas" id="Q8N9W8"/>
<dbReference type="ProteomicsDB" id="72604">
    <molecule id="Q8N9W8-1"/>
</dbReference>
<dbReference type="ProteomicsDB" id="72605">
    <molecule id="Q8N9W8-2"/>
</dbReference>
<dbReference type="Antibodypedia" id="68">
    <property type="antibodies" value="36 antibodies from 11 providers"/>
</dbReference>
<dbReference type="DNASU" id="161142"/>
<dbReference type="Ensembl" id="ENST00000534174.5">
    <molecule id="Q8N9W8-2"/>
    <property type="protein sequence ID" value="ENSP00000432195.1"/>
    <property type="gene ID" value="ENSG00000172717.17"/>
</dbReference>
<dbReference type="Ensembl" id="ENST00000612183.4">
    <molecule id="Q8N9W8-1"/>
    <property type="protein sequence ID" value="ENSP00000483154.1"/>
    <property type="gene ID" value="ENSG00000172717.17"/>
</dbReference>
<dbReference type="GeneID" id="161142"/>
<dbReference type="KEGG" id="hsa:161142"/>
<dbReference type="UCSC" id="uc001xja.2">
    <molecule id="Q8N9W8-1"/>
    <property type="organism name" value="human"/>
</dbReference>
<dbReference type="AGR" id="HGNC:20101"/>
<dbReference type="CTD" id="161142"/>
<dbReference type="DisGeNET" id="161142"/>
<dbReference type="GeneCards" id="GARIN2"/>
<dbReference type="HGNC" id="HGNC:20101">
    <property type="gene designation" value="GARIN2"/>
</dbReference>
<dbReference type="HPA" id="ENSG00000172717">
    <property type="expression patterns" value="Tissue enriched (testis)"/>
</dbReference>
<dbReference type="MIM" id="619898">
    <property type="type" value="gene"/>
</dbReference>
<dbReference type="neXtProt" id="NX_Q8N9W8"/>
<dbReference type="OpenTargets" id="ENSG00000172717"/>
<dbReference type="VEuPathDB" id="HostDB:ENSG00000172717"/>
<dbReference type="eggNOG" id="ENOG502S1VC">
    <property type="taxonomic scope" value="Eukaryota"/>
</dbReference>
<dbReference type="GeneTree" id="ENSGT00940000161537"/>
<dbReference type="HOGENOM" id="CLU_055234_0_0_1"/>
<dbReference type="InParanoid" id="Q8N9W8"/>
<dbReference type="OMA" id="HKTPNVM"/>
<dbReference type="OrthoDB" id="9445880at2759"/>
<dbReference type="PAN-GO" id="Q8N9W8">
    <property type="GO annotations" value="0 GO annotations based on evolutionary models"/>
</dbReference>
<dbReference type="PhylomeDB" id="Q8N9W8"/>
<dbReference type="PathwayCommons" id="Q8N9W8"/>
<dbReference type="SignaLink" id="Q8N9W8"/>
<dbReference type="BioGRID-ORCS" id="161142">
    <property type="hits" value="10 hits in 1079 CRISPR screens"/>
</dbReference>
<dbReference type="GenomeRNAi" id="161142"/>
<dbReference type="Pharos" id="Q8N9W8">
    <property type="development level" value="Tdark"/>
</dbReference>
<dbReference type="PRO" id="PR:Q8N9W8"/>
<dbReference type="Proteomes" id="UP000005640">
    <property type="component" value="Chromosome 14"/>
</dbReference>
<dbReference type="RNAct" id="Q8N9W8">
    <property type="molecule type" value="protein"/>
</dbReference>
<dbReference type="Bgee" id="ENSG00000172717">
    <property type="expression patterns" value="Expressed in left testis and 98 other cell types or tissues"/>
</dbReference>
<dbReference type="ExpressionAtlas" id="Q8N9W8">
    <property type="expression patterns" value="baseline and differential"/>
</dbReference>
<dbReference type="GO" id="GO:0097225">
    <property type="term" value="C:sperm midpiece"/>
    <property type="evidence" value="ECO:0000250"/>
    <property type="project" value="UniProtKB"/>
</dbReference>
<dbReference type="GO" id="GO:0030317">
    <property type="term" value="P:flagellated sperm motility"/>
    <property type="evidence" value="ECO:0000250"/>
    <property type="project" value="UniProtKB"/>
</dbReference>
<dbReference type="InterPro" id="IPR022168">
    <property type="entry name" value="GARIL-like_Rab2B-bd"/>
</dbReference>
<dbReference type="PANTHER" id="PTHR22574">
    <property type="match status" value="1"/>
</dbReference>
<dbReference type="PANTHER" id="PTHR22574:SF6">
    <property type="entry name" value="GOLGI-ASSOCIATED RAB2 INTERACTOR PROTEIN 2"/>
    <property type="match status" value="1"/>
</dbReference>
<dbReference type="Pfam" id="PF12480">
    <property type="entry name" value="GARIL_Rab2_bd"/>
    <property type="match status" value="1"/>
</dbReference>
<accession>Q8N9W8</accession>
<accession>Q86VN4</accession>
<proteinExistence type="evidence at protein level"/>